<keyword id="KW-0324">Glycolysis</keyword>
<keyword id="KW-0413">Isomerase</keyword>
<keyword id="KW-0464">Manganese</keyword>
<keyword id="KW-0479">Metal-binding</keyword>
<reference key="1">
    <citation type="journal article" date="2009" name="Genome Biol.">
        <title>Genomic and genetic analyses of diversity and plant interactions of Pseudomonas fluorescens.</title>
        <authorList>
            <person name="Silby M.W."/>
            <person name="Cerdeno-Tarraga A.M."/>
            <person name="Vernikos G.S."/>
            <person name="Giddens S.R."/>
            <person name="Jackson R.W."/>
            <person name="Preston G.M."/>
            <person name="Zhang X.-X."/>
            <person name="Moon C.D."/>
            <person name="Gehrig S.M."/>
            <person name="Godfrey S.A.C."/>
            <person name="Knight C.G."/>
            <person name="Malone J.G."/>
            <person name="Robinson Z."/>
            <person name="Spiers A.J."/>
            <person name="Harris S."/>
            <person name="Challis G.L."/>
            <person name="Yaxley A.M."/>
            <person name="Harris D."/>
            <person name="Seeger K."/>
            <person name="Murphy L."/>
            <person name="Rutter S."/>
            <person name="Squares R."/>
            <person name="Quail M.A."/>
            <person name="Saunders E."/>
            <person name="Mavromatis K."/>
            <person name="Brettin T.S."/>
            <person name="Bentley S.D."/>
            <person name="Hothersall J."/>
            <person name="Stephens E."/>
            <person name="Thomas C.M."/>
            <person name="Parkhill J."/>
            <person name="Levy S.B."/>
            <person name="Rainey P.B."/>
            <person name="Thomson N.R."/>
        </authorList>
    </citation>
    <scope>NUCLEOTIDE SEQUENCE [LARGE SCALE GENOMIC DNA]</scope>
    <source>
        <strain>Pf0-1</strain>
    </source>
</reference>
<feature type="chain" id="PRO_1000063992" description="2,3-bisphosphoglycerate-independent phosphoglycerate mutase">
    <location>
        <begin position="1"/>
        <end position="508"/>
    </location>
</feature>
<feature type="active site" description="Phosphoserine intermediate" evidence="1">
    <location>
        <position position="64"/>
    </location>
</feature>
<feature type="binding site" evidence="1">
    <location>
        <position position="14"/>
    </location>
    <ligand>
        <name>Mn(2+)</name>
        <dbReference type="ChEBI" id="CHEBI:29035"/>
        <label>2</label>
    </ligand>
</feature>
<feature type="binding site" evidence="1">
    <location>
        <position position="64"/>
    </location>
    <ligand>
        <name>Mn(2+)</name>
        <dbReference type="ChEBI" id="CHEBI:29035"/>
        <label>2</label>
    </ligand>
</feature>
<feature type="binding site" evidence="1">
    <location>
        <position position="125"/>
    </location>
    <ligand>
        <name>substrate</name>
    </ligand>
</feature>
<feature type="binding site" evidence="1">
    <location>
        <begin position="155"/>
        <end position="156"/>
    </location>
    <ligand>
        <name>substrate</name>
    </ligand>
</feature>
<feature type="binding site" evidence="1">
    <location>
        <position position="187"/>
    </location>
    <ligand>
        <name>substrate</name>
    </ligand>
</feature>
<feature type="binding site" evidence="1">
    <location>
        <position position="193"/>
    </location>
    <ligand>
        <name>substrate</name>
    </ligand>
</feature>
<feature type="binding site" evidence="1">
    <location>
        <begin position="259"/>
        <end position="262"/>
    </location>
    <ligand>
        <name>substrate</name>
    </ligand>
</feature>
<feature type="binding site" evidence="1">
    <location>
        <position position="332"/>
    </location>
    <ligand>
        <name>substrate</name>
    </ligand>
</feature>
<feature type="binding site" evidence="1">
    <location>
        <position position="399"/>
    </location>
    <ligand>
        <name>Mn(2+)</name>
        <dbReference type="ChEBI" id="CHEBI:29035"/>
        <label>1</label>
    </ligand>
</feature>
<feature type="binding site" evidence="1">
    <location>
        <position position="403"/>
    </location>
    <ligand>
        <name>Mn(2+)</name>
        <dbReference type="ChEBI" id="CHEBI:29035"/>
        <label>1</label>
    </ligand>
</feature>
<feature type="binding site" evidence="1">
    <location>
        <position position="440"/>
    </location>
    <ligand>
        <name>Mn(2+)</name>
        <dbReference type="ChEBI" id="CHEBI:29035"/>
        <label>2</label>
    </ligand>
</feature>
<feature type="binding site" evidence="1">
    <location>
        <position position="441"/>
    </location>
    <ligand>
        <name>Mn(2+)</name>
        <dbReference type="ChEBI" id="CHEBI:29035"/>
        <label>2</label>
    </ligand>
</feature>
<feature type="binding site" evidence="1">
    <location>
        <position position="459"/>
    </location>
    <ligand>
        <name>Mn(2+)</name>
        <dbReference type="ChEBI" id="CHEBI:29035"/>
        <label>1</label>
    </ligand>
</feature>
<evidence type="ECO:0000255" key="1">
    <source>
        <dbReference type="HAMAP-Rule" id="MF_01038"/>
    </source>
</evidence>
<name>GPMI_PSEPF</name>
<proteinExistence type="inferred from homology"/>
<comment type="function">
    <text evidence="1">Catalyzes the interconversion of 2-phosphoglycerate and 3-phosphoglycerate.</text>
</comment>
<comment type="catalytic activity">
    <reaction evidence="1">
        <text>(2R)-2-phosphoglycerate = (2R)-3-phosphoglycerate</text>
        <dbReference type="Rhea" id="RHEA:15901"/>
        <dbReference type="ChEBI" id="CHEBI:58272"/>
        <dbReference type="ChEBI" id="CHEBI:58289"/>
        <dbReference type="EC" id="5.4.2.12"/>
    </reaction>
</comment>
<comment type="cofactor">
    <cofactor evidence="1">
        <name>Mn(2+)</name>
        <dbReference type="ChEBI" id="CHEBI:29035"/>
    </cofactor>
    <text evidence="1">Binds 2 manganese ions per subunit.</text>
</comment>
<comment type="pathway">
    <text evidence="1">Carbohydrate degradation; glycolysis; pyruvate from D-glyceraldehyde 3-phosphate: step 3/5.</text>
</comment>
<comment type="subunit">
    <text evidence="1">Monomer.</text>
</comment>
<comment type="similarity">
    <text evidence="1">Belongs to the BPG-independent phosphoglycerate mutase family.</text>
</comment>
<organism>
    <name type="scientific">Pseudomonas fluorescens (strain Pf0-1)</name>
    <dbReference type="NCBI Taxonomy" id="205922"/>
    <lineage>
        <taxon>Bacteria</taxon>
        <taxon>Pseudomonadati</taxon>
        <taxon>Pseudomonadota</taxon>
        <taxon>Gammaproteobacteria</taxon>
        <taxon>Pseudomonadales</taxon>
        <taxon>Pseudomonadaceae</taxon>
        <taxon>Pseudomonas</taxon>
    </lineage>
</organism>
<gene>
    <name evidence="1" type="primary">gpmI</name>
    <name type="ordered locus">Pfl01_0333</name>
</gene>
<sequence>MTTTPKPLVLMILDGFGHSDSPESNAVYAAKKPVLDRLWATVPNGLISGSGMDVGLPDGQMGNSEVGHMNLGAGRVVYQDFTRVTKAIRDGEFFENPTICAAVDKAVAAGKAVHFMGLLSDGGVHSHQDHLIAMAELAFKRGAEKIYLHAFLDGRDTPPKSAASSIELLDATFQALGKGRIASLIGRYYAMDRDNRWDRVAQAYNLIVDGKGEINAATAQEGLEAAYARGESDEFVKATSIGEPVKVEDGDAVVFMNFRADRARELSRVFVEDGFKEFERARQPKVQYVGLTQYAESIPAPAAFAPGSLENVLGDYLAKNGKTQLRIAETEKYAHVTFFFSGGREEPFPGEERILIPSPKVATYDLQPEMSAPEVTDRIVEAIENQRYDVIVVNYANGDMVGHSGVFEAAVKAVECLDTCVGRIVEALEKVGGEALITADHGNVEQMADESTGQAHTAHTTEPVPFIYVGKRDLKVREGGVLADVAPTMLKLLGLEKPAEMTGTSILV</sequence>
<protein>
    <recommendedName>
        <fullName evidence="1">2,3-bisphosphoglycerate-independent phosphoglycerate mutase</fullName>
        <shortName evidence="1">BPG-independent PGAM</shortName>
        <shortName evidence="1">Phosphoglyceromutase</shortName>
        <shortName evidence="1">iPGM</shortName>
        <ecNumber evidence="1">5.4.2.12</ecNumber>
    </recommendedName>
</protein>
<accession>Q3KJH9</accession>
<dbReference type="EC" id="5.4.2.12" evidence="1"/>
<dbReference type="EMBL" id="CP000094">
    <property type="protein sequence ID" value="ABA72077.1"/>
    <property type="molecule type" value="Genomic_DNA"/>
</dbReference>
<dbReference type="RefSeq" id="WP_011332026.1">
    <property type="nucleotide sequence ID" value="NC_007492.2"/>
</dbReference>
<dbReference type="SMR" id="Q3KJH9"/>
<dbReference type="KEGG" id="pfo:Pfl01_0333"/>
<dbReference type="eggNOG" id="COG0696">
    <property type="taxonomic scope" value="Bacteria"/>
</dbReference>
<dbReference type="HOGENOM" id="CLU_026099_2_0_6"/>
<dbReference type="UniPathway" id="UPA00109">
    <property type="reaction ID" value="UER00186"/>
</dbReference>
<dbReference type="Proteomes" id="UP000002704">
    <property type="component" value="Chromosome"/>
</dbReference>
<dbReference type="GO" id="GO:0005829">
    <property type="term" value="C:cytosol"/>
    <property type="evidence" value="ECO:0007669"/>
    <property type="project" value="TreeGrafter"/>
</dbReference>
<dbReference type="GO" id="GO:0030145">
    <property type="term" value="F:manganese ion binding"/>
    <property type="evidence" value="ECO:0007669"/>
    <property type="project" value="UniProtKB-UniRule"/>
</dbReference>
<dbReference type="GO" id="GO:0004619">
    <property type="term" value="F:phosphoglycerate mutase activity"/>
    <property type="evidence" value="ECO:0007669"/>
    <property type="project" value="UniProtKB-EC"/>
</dbReference>
<dbReference type="GO" id="GO:0006007">
    <property type="term" value="P:glucose catabolic process"/>
    <property type="evidence" value="ECO:0007669"/>
    <property type="project" value="InterPro"/>
</dbReference>
<dbReference type="GO" id="GO:0006096">
    <property type="term" value="P:glycolytic process"/>
    <property type="evidence" value="ECO:0007669"/>
    <property type="project" value="UniProtKB-UniRule"/>
</dbReference>
<dbReference type="CDD" id="cd16010">
    <property type="entry name" value="iPGM"/>
    <property type="match status" value="1"/>
</dbReference>
<dbReference type="FunFam" id="3.40.1450.10:FF:000001">
    <property type="entry name" value="2,3-bisphosphoglycerate-independent phosphoglycerate mutase"/>
    <property type="match status" value="1"/>
</dbReference>
<dbReference type="FunFam" id="3.40.720.10:FF:000001">
    <property type="entry name" value="2,3-bisphosphoglycerate-independent phosphoglycerate mutase"/>
    <property type="match status" value="1"/>
</dbReference>
<dbReference type="Gene3D" id="3.40.720.10">
    <property type="entry name" value="Alkaline Phosphatase, subunit A"/>
    <property type="match status" value="1"/>
</dbReference>
<dbReference type="Gene3D" id="3.40.1450.10">
    <property type="entry name" value="BPG-independent phosphoglycerate mutase, domain B"/>
    <property type="match status" value="1"/>
</dbReference>
<dbReference type="HAMAP" id="MF_01038">
    <property type="entry name" value="GpmI"/>
    <property type="match status" value="1"/>
</dbReference>
<dbReference type="InterPro" id="IPR017850">
    <property type="entry name" value="Alkaline_phosphatase_core_sf"/>
</dbReference>
<dbReference type="InterPro" id="IPR011258">
    <property type="entry name" value="BPG-indep_PGM_N"/>
</dbReference>
<dbReference type="InterPro" id="IPR006124">
    <property type="entry name" value="Metalloenzyme"/>
</dbReference>
<dbReference type="InterPro" id="IPR036646">
    <property type="entry name" value="PGAM_B_sf"/>
</dbReference>
<dbReference type="InterPro" id="IPR005995">
    <property type="entry name" value="Pgm_bpd_ind"/>
</dbReference>
<dbReference type="NCBIfam" id="TIGR01307">
    <property type="entry name" value="pgm_bpd_ind"/>
    <property type="match status" value="1"/>
</dbReference>
<dbReference type="PANTHER" id="PTHR31637">
    <property type="entry name" value="2,3-BISPHOSPHOGLYCERATE-INDEPENDENT PHOSPHOGLYCERATE MUTASE"/>
    <property type="match status" value="1"/>
</dbReference>
<dbReference type="PANTHER" id="PTHR31637:SF0">
    <property type="entry name" value="2,3-BISPHOSPHOGLYCERATE-INDEPENDENT PHOSPHOGLYCERATE MUTASE"/>
    <property type="match status" value="1"/>
</dbReference>
<dbReference type="Pfam" id="PF06415">
    <property type="entry name" value="iPGM_N"/>
    <property type="match status" value="1"/>
</dbReference>
<dbReference type="Pfam" id="PF01676">
    <property type="entry name" value="Metalloenzyme"/>
    <property type="match status" value="1"/>
</dbReference>
<dbReference type="PIRSF" id="PIRSF001492">
    <property type="entry name" value="IPGAM"/>
    <property type="match status" value="1"/>
</dbReference>
<dbReference type="SUPFAM" id="SSF64158">
    <property type="entry name" value="2,3-Bisphosphoglycerate-independent phosphoglycerate mutase, substrate-binding domain"/>
    <property type="match status" value="1"/>
</dbReference>
<dbReference type="SUPFAM" id="SSF53649">
    <property type="entry name" value="Alkaline phosphatase-like"/>
    <property type="match status" value="1"/>
</dbReference>